<dbReference type="EC" id="4.6.1.12" evidence="1"/>
<dbReference type="EMBL" id="AE015925">
    <property type="protein sequence ID" value="AAP04946.1"/>
    <property type="molecule type" value="Genomic_DNA"/>
</dbReference>
<dbReference type="RefSeq" id="WP_011006165.1">
    <property type="nucleotide sequence ID" value="NC_003361.3"/>
</dbReference>
<dbReference type="SMR" id="Q824F7"/>
<dbReference type="STRING" id="227941.CCA_00195"/>
<dbReference type="KEGG" id="cca:CCA_00195"/>
<dbReference type="eggNOG" id="COG0245">
    <property type="taxonomic scope" value="Bacteria"/>
</dbReference>
<dbReference type="HOGENOM" id="CLU_084630_2_0_0"/>
<dbReference type="OrthoDB" id="9804336at2"/>
<dbReference type="UniPathway" id="UPA00056">
    <property type="reaction ID" value="UER00095"/>
</dbReference>
<dbReference type="Proteomes" id="UP000002193">
    <property type="component" value="Chromosome"/>
</dbReference>
<dbReference type="GO" id="GO:0008685">
    <property type="term" value="F:2-C-methyl-D-erythritol 2,4-cyclodiphosphate synthase activity"/>
    <property type="evidence" value="ECO:0007669"/>
    <property type="project" value="UniProtKB-UniRule"/>
</dbReference>
<dbReference type="GO" id="GO:0046872">
    <property type="term" value="F:metal ion binding"/>
    <property type="evidence" value="ECO:0007669"/>
    <property type="project" value="UniProtKB-KW"/>
</dbReference>
<dbReference type="GO" id="GO:0019288">
    <property type="term" value="P:isopentenyl diphosphate biosynthetic process, methylerythritol 4-phosphate pathway"/>
    <property type="evidence" value="ECO:0007669"/>
    <property type="project" value="UniProtKB-UniRule"/>
</dbReference>
<dbReference type="GO" id="GO:0016114">
    <property type="term" value="P:terpenoid biosynthetic process"/>
    <property type="evidence" value="ECO:0007669"/>
    <property type="project" value="InterPro"/>
</dbReference>
<dbReference type="CDD" id="cd00554">
    <property type="entry name" value="MECDP_synthase"/>
    <property type="match status" value="1"/>
</dbReference>
<dbReference type="Gene3D" id="3.30.1330.50">
    <property type="entry name" value="2-C-methyl-D-erythritol 2,4-cyclodiphosphate synthase"/>
    <property type="match status" value="1"/>
</dbReference>
<dbReference type="HAMAP" id="MF_00107">
    <property type="entry name" value="IspF"/>
    <property type="match status" value="1"/>
</dbReference>
<dbReference type="InterPro" id="IPR003526">
    <property type="entry name" value="MECDP_synthase"/>
</dbReference>
<dbReference type="InterPro" id="IPR020555">
    <property type="entry name" value="MECDP_synthase_CS"/>
</dbReference>
<dbReference type="InterPro" id="IPR036571">
    <property type="entry name" value="MECDP_synthase_sf"/>
</dbReference>
<dbReference type="NCBIfam" id="TIGR00151">
    <property type="entry name" value="ispF"/>
    <property type="match status" value="1"/>
</dbReference>
<dbReference type="PANTHER" id="PTHR43181">
    <property type="entry name" value="2-C-METHYL-D-ERYTHRITOL 2,4-CYCLODIPHOSPHATE SYNTHASE, CHLOROPLASTIC"/>
    <property type="match status" value="1"/>
</dbReference>
<dbReference type="PANTHER" id="PTHR43181:SF1">
    <property type="entry name" value="2-C-METHYL-D-ERYTHRITOL 2,4-CYCLODIPHOSPHATE SYNTHASE, CHLOROPLASTIC"/>
    <property type="match status" value="1"/>
</dbReference>
<dbReference type="Pfam" id="PF02542">
    <property type="entry name" value="YgbB"/>
    <property type="match status" value="1"/>
</dbReference>
<dbReference type="SUPFAM" id="SSF69765">
    <property type="entry name" value="IpsF-like"/>
    <property type="match status" value="1"/>
</dbReference>
<dbReference type="PROSITE" id="PS01350">
    <property type="entry name" value="ISPF"/>
    <property type="match status" value="1"/>
</dbReference>
<accession>Q824F7</accession>
<protein>
    <recommendedName>
        <fullName evidence="1">2-C-methyl-D-erythritol 2,4-cyclodiphosphate synthase</fullName>
        <shortName evidence="1">MECDP-synthase</shortName>
        <shortName evidence="1">MECPP-synthase</shortName>
        <shortName evidence="1">MECPS</shortName>
        <ecNumber evidence="1">4.6.1.12</ecNumber>
    </recommendedName>
</protein>
<evidence type="ECO:0000255" key="1">
    <source>
        <dbReference type="HAMAP-Rule" id="MF_00107"/>
    </source>
</evidence>
<name>ISPF_CHLCV</name>
<feature type="chain" id="PRO_0000189451" description="2-C-methyl-D-erythritol 2,4-cyclodiphosphate synthase">
    <location>
        <begin position="1"/>
        <end position="176"/>
    </location>
</feature>
<feature type="binding site" evidence="1">
    <location>
        <begin position="23"/>
        <end position="25"/>
    </location>
    <ligand>
        <name>4-CDP-2-C-methyl-D-erythritol 2-phosphate</name>
        <dbReference type="ChEBI" id="CHEBI:57919"/>
    </ligand>
</feature>
<feature type="binding site" evidence="1">
    <location>
        <position position="23"/>
    </location>
    <ligand>
        <name>a divalent metal cation</name>
        <dbReference type="ChEBI" id="CHEBI:60240"/>
    </ligand>
</feature>
<feature type="binding site" evidence="1">
    <location>
        <position position="25"/>
    </location>
    <ligand>
        <name>a divalent metal cation</name>
        <dbReference type="ChEBI" id="CHEBI:60240"/>
    </ligand>
</feature>
<feature type="binding site" evidence="1">
    <location>
        <position position="60"/>
    </location>
    <ligand>
        <name>a divalent metal cation</name>
        <dbReference type="ChEBI" id="CHEBI:60240"/>
    </ligand>
</feature>
<feature type="binding site" evidence="1">
    <location>
        <begin position="149"/>
        <end position="152"/>
    </location>
    <ligand>
        <name>4-CDP-2-C-methyl-D-erythritol 2-phosphate</name>
        <dbReference type="ChEBI" id="CHEBI:57919"/>
    </ligand>
</feature>
<feature type="site" description="Transition state stabilizer" evidence="1">
    <location>
        <position position="52"/>
    </location>
</feature>
<feature type="site" description="Transition state stabilizer" evidence="1">
    <location>
        <position position="150"/>
    </location>
</feature>
<sequence>MDAENDSPLPKPQWIYRVGIGQDSHRFLSESSAKPCILAGVIFENSPGFQANSDGDIVFHAICNAISSVTHRIILGEVADELFHTRGITDSSVYLSEAIKSLKSNQMISHVAITIEGNRPKFLPKLSAMRQSIASALNIPLGSVGITATSGEGLSDFGCGDGVQCFCVLTVAEYCN</sequence>
<organism>
    <name type="scientific">Chlamydia caviae (strain ATCC VR-813 / DSM 19441 / 03DC25 / GPIC)</name>
    <name type="common">Chlamydophila caviae</name>
    <dbReference type="NCBI Taxonomy" id="227941"/>
    <lineage>
        <taxon>Bacteria</taxon>
        <taxon>Pseudomonadati</taxon>
        <taxon>Chlamydiota</taxon>
        <taxon>Chlamydiia</taxon>
        <taxon>Chlamydiales</taxon>
        <taxon>Chlamydiaceae</taxon>
        <taxon>Chlamydia/Chlamydophila group</taxon>
        <taxon>Chlamydia</taxon>
    </lineage>
</organism>
<gene>
    <name evidence="1" type="primary">ispF</name>
    <name type="ordered locus">CCA_00195</name>
</gene>
<reference key="1">
    <citation type="journal article" date="2003" name="Nucleic Acids Res.">
        <title>Genome sequence of Chlamydophila caviae (Chlamydia psittaci GPIC): examining the role of niche-specific genes in the evolution of the Chlamydiaceae.</title>
        <authorList>
            <person name="Read T.D."/>
            <person name="Myers G.S.A."/>
            <person name="Brunham R.C."/>
            <person name="Nelson W.C."/>
            <person name="Paulsen I.T."/>
            <person name="Heidelberg J.F."/>
            <person name="Holtzapple E.K."/>
            <person name="Khouri H.M."/>
            <person name="Federova N.B."/>
            <person name="Carty H.A."/>
            <person name="Umayam L.A."/>
            <person name="Haft D.H."/>
            <person name="Peterson J.D."/>
            <person name="Beanan M.J."/>
            <person name="White O."/>
            <person name="Salzberg S.L."/>
            <person name="Hsia R.-C."/>
            <person name="McClarty G."/>
            <person name="Rank R.G."/>
            <person name="Bavoil P.M."/>
            <person name="Fraser C.M."/>
        </authorList>
    </citation>
    <scope>NUCLEOTIDE SEQUENCE [LARGE SCALE GENOMIC DNA]</scope>
    <source>
        <strain>ATCC VR-813 / DSM 19441 / 03DC25 / GPIC</strain>
    </source>
</reference>
<keyword id="KW-0414">Isoprene biosynthesis</keyword>
<keyword id="KW-0456">Lyase</keyword>
<keyword id="KW-0479">Metal-binding</keyword>
<proteinExistence type="inferred from homology"/>
<comment type="function">
    <text evidence="1">Involved in the biosynthesis of isopentenyl diphosphate (IPP) and dimethylallyl diphosphate (DMAPP), two major building blocks of isoprenoid compounds. Catalyzes the conversion of 4-diphosphocytidyl-2-C-methyl-D-erythritol 2-phosphate (CDP-ME2P) to 2-C-methyl-D-erythritol 2,4-cyclodiphosphate (ME-CPP) with a corresponding release of cytidine 5-monophosphate (CMP).</text>
</comment>
<comment type="catalytic activity">
    <reaction evidence="1">
        <text>4-CDP-2-C-methyl-D-erythritol 2-phosphate = 2-C-methyl-D-erythritol 2,4-cyclic diphosphate + CMP</text>
        <dbReference type="Rhea" id="RHEA:23864"/>
        <dbReference type="ChEBI" id="CHEBI:57919"/>
        <dbReference type="ChEBI" id="CHEBI:58483"/>
        <dbReference type="ChEBI" id="CHEBI:60377"/>
        <dbReference type="EC" id="4.6.1.12"/>
    </reaction>
</comment>
<comment type="cofactor">
    <cofactor evidence="1">
        <name>a divalent metal cation</name>
        <dbReference type="ChEBI" id="CHEBI:60240"/>
    </cofactor>
    <text evidence="1">Binds 1 divalent metal cation per subunit.</text>
</comment>
<comment type="pathway">
    <text evidence="1">Isoprenoid biosynthesis; isopentenyl diphosphate biosynthesis via DXP pathway; isopentenyl diphosphate from 1-deoxy-D-xylulose 5-phosphate: step 4/6.</text>
</comment>
<comment type="subunit">
    <text evidence="1">Homotrimer.</text>
</comment>
<comment type="similarity">
    <text evidence="1">Belongs to the IspF family.</text>
</comment>